<protein>
    <recommendedName>
        <fullName evidence="2">Ornithine carbamoyltransferase</fullName>
        <shortName evidence="2">OTCase</shortName>
        <ecNumber evidence="2">2.1.3.3</ecNumber>
    </recommendedName>
</protein>
<name>OTC_LIMRJ</name>
<proteinExistence type="inferred from homology"/>
<sequence>MAFNLRNRSFLTLADFNTREMEYMLDLAEDLKKAKYAGYEGKNLKGKNIALIFEKSSTRTRCSFEVGAKDEGAHVTYLGPSGSHIGHKESVKDTARVLGGMFDGIEYRGFSQRNVEILAKYSGVPVWNGLTDEDHPTQVLADFLTAHEVLKKPYKDIKFAFVGDGQDNVSNALMLGAAVMGMEYHVVTPKELEPTKETLDKANEIAAKTGAKIVVTNDIKEGVKGMDVIYADVWVSMGESDDMWEKRINLLKPYQVTMDVMKATENPNVLFEHCLPAFHNLDTEVGKEIEKKFGLKEMEVTDEVFESEHSVVFREAENRMHTIKAVMVATLGEQN</sequence>
<organism>
    <name type="scientific">Limosilactobacillus reuteri subsp. reuteri (strain JCM 1112)</name>
    <name type="common">Lactobacillus reuteri</name>
    <dbReference type="NCBI Taxonomy" id="557433"/>
    <lineage>
        <taxon>Bacteria</taxon>
        <taxon>Bacillati</taxon>
        <taxon>Bacillota</taxon>
        <taxon>Bacilli</taxon>
        <taxon>Lactobacillales</taxon>
        <taxon>Lactobacillaceae</taxon>
        <taxon>Limosilactobacillus</taxon>
    </lineage>
</organism>
<feature type="chain" id="PRO_1000137098" description="Ornithine carbamoyltransferase">
    <location>
        <begin position="1"/>
        <end position="335"/>
    </location>
</feature>
<feature type="binding site" evidence="2">
    <location>
        <begin position="57"/>
        <end position="60"/>
    </location>
    <ligand>
        <name>carbamoyl phosphate</name>
        <dbReference type="ChEBI" id="CHEBI:58228"/>
    </ligand>
</feature>
<feature type="binding site" evidence="2">
    <location>
        <position position="108"/>
    </location>
    <ligand>
        <name>carbamoyl phosphate</name>
        <dbReference type="ChEBI" id="CHEBI:58228"/>
    </ligand>
</feature>
<feature type="binding site" evidence="2">
    <location>
        <begin position="135"/>
        <end position="138"/>
    </location>
    <ligand>
        <name>carbamoyl phosphate</name>
        <dbReference type="ChEBI" id="CHEBI:58228"/>
    </ligand>
</feature>
<feature type="binding site" evidence="2">
    <location>
        <position position="168"/>
    </location>
    <ligand>
        <name>L-ornithine</name>
        <dbReference type="ChEBI" id="CHEBI:46911"/>
    </ligand>
</feature>
<feature type="binding site" evidence="2">
    <location>
        <position position="232"/>
    </location>
    <ligand>
        <name>L-ornithine</name>
        <dbReference type="ChEBI" id="CHEBI:46911"/>
    </ligand>
</feature>
<feature type="binding site" evidence="2">
    <location>
        <begin position="236"/>
        <end position="237"/>
    </location>
    <ligand>
        <name>L-ornithine</name>
        <dbReference type="ChEBI" id="CHEBI:46911"/>
    </ligand>
</feature>
<feature type="binding site" evidence="2">
    <location>
        <begin position="274"/>
        <end position="275"/>
    </location>
    <ligand>
        <name>carbamoyl phosphate</name>
        <dbReference type="ChEBI" id="CHEBI:58228"/>
    </ligand>
</feature>
<feature type="binding site" evidence="2">
    <location>
        <position position="319"/>
    </location>
    <ligand>
        <name>carbamoyl phosphate</name>
        <dbReference type="ChEBI" id="CHEBI:58228"/>
    </ligand>
</feature>
<dbReference type="EC" id="2.1.3.3" evidence="2"/>
<dbReference type="EMBL" id="AP007281">
    <property type="protein sequence ID" value="BAG24935.1"/>
    <property type="molecule type" value="Genomic_DNA"/>
</dbReference>
<dbReference type="SMR" id="B2G653"/>
<dbReference type="KEGG" id="lrf:LAR_0419"/>
<dbReference type="HOGENOM" id="CLU_043846_3_1_9"/>
<dbReference type="UniPathway" id="UPA00254">
    <property type="reaction ID" value="UER00365"/>
</dbReference>
<dbReference type="GO" id="GO:0005737">
    <property type="term" value="C:cytoplasm"/>
    <property type="evidence" value="ECO:0007669"/>
    <property type="project" value="UniProtKB-SubCell"/>
</dbReference>
<dbReference type="GO" id="GO:0016597">
    <property type="term" value="F:amino acid binding"/>
    <property type="evidence" value="ECO:0007669"/>
    <property type="project" value="InterPro"/>
</dbReference>
<dbReference type="GO" id="GO:0004585">
    <property type="term" value="F:ornithine carbamoyltransferase activity"/>
    <property type="evidence" value="ECO:0007669"/>
    <property type="project" value="UniProtKB-UniRule"/>
</dbReference>
<dbReference type="GO" id="GO:0042450">
    <property type="term" value="P:arginine biosynthetic process via ornithine"/>
    <property type="evidence" value="ECO:0007669"/>
    <property type="project" value="TreeGrafter"/>
</dbReference>
<dbReference type="GO" id="GO:0019547">
    <property type="term" value="P:arginine catabolic process to ornithine"/>
    <property type="evidence" value="ECO:0007669"/>
    <property type="project" value="UniProtKB-UniRule"/>
</dbReference>
<dbReference type="GO" id="GO:0019240">
    <property type="term" value="P:citrulline biosynthetic process"/>
    <property type="evidence" value="ECO:0007669"/>
    <property type="project" value="TreeGrafter"/>
</dbReference>
<dbReference type="FunFam" id="3.40.50.1370:FF:000008">
    <property type="entry name" value="Ornithine carbamoyltransferase"/>
    <property type="match status" value="1"/>
</dbReference>
<dbReference type="Gene3D" id="3.40.50.1370">
    <property type="entry name" value="Aspartate/ornithine carbamoyltransferase"/>
    <property type="match status" value="2"/>
</dbReference>
<dbReference type="HAMAP" id="MF_01109">
    <property type="entry name" value="OTCase"/>
    <property type="match status" value="1"/>
</dbReference>
<dbReference type="InterPro" id="IPR006132">
    <property type="entry name" value="Asp/Orn_carbamoyltranf_P-bd"/>
</dbReference>
<dbReference type="InterPro" id="IPR006130">
    <property type="entry name" value="Asp/Orn_carbamoylTrfase"/>
</dbReference>
<dbReference type="InterPro" id="IPR036901">
    <property type="entry name" value="Asp/Orn_carbamoylTrfase_sf"/>
</dbReference>
<dbReference type="InterPro" id="IPR006131">
    <property type="entry name" value="Asp_carbamoyltransf_Asp/Orn-bd"/>
</dbReference>
<dbReference type="InterPro" id="IPR002292">
    <property type="entry name" value="Orn/put_carbamltrans"/>
</dbReference>
<dbReference type="InterPro" id="IPR024904">
    <property type="entry name" value="OTCase_ArgI"/>
</dbReference>
<dbReference type="NCBIfam" id="TIGR00658">
    <property type="entry name" value="orni_carb_tr"/>
    <property type="match status" value="1"/>
</dbReference>
<dbReference type="NCBIfam" id="NF003286">
    <property type="entry name" value="PRK04284.1"/>
    <property type="match status" value="1"/>
</dbReference>
<dbReference type="PANTHER" id="PTHR45753:SF2">
    <property type="entry name" value="ORNITHINE CARBAMOYLTRANSFERASE"/>
    <property type="match status" value="1"/>
</dbReference>
<dbReference type="PANTHER" id="PTHR45753">
    <property type="entry name" value="ORNITHINE CARBAMOYLTRANSFERASE, MITOCHONDRIAL"/>
    <property type="match status" value="1"/>
</dbReference>
<dbReference type="Pfam" id="PF00185">
    <property type="entry name" value="OTCace"/>
    <property type="match status" value="1"/>
</dbReference>
<dbReference type="Pfam" id="PF02729">
    <property type="entry name" value="OTCace_N"/>
    <property type="match status" value="1"/>
</dbReference>
<dbReference type="PRINTS" id="PR00100">
    <property type="entry name" value="AOTCASE"/>
</dbReference>
<dbReference type="PRINTS" id="PR00102">
    <property type="entry name" value="OTCASE"/>
</dbReference>
<dbReference type="SUPFAM" id="SSF53671">
    <property type="entry name" value="Aspartate/ornithine carbamoyltransferase"/>
    <property type="match status" value="1"/>
</dbReference>
<dbReference type="PROSITE" id="PS00097">
    <property type="entry name" value="CARBAMOYLTRANSFERASE"/>
    <property type="match status" value="1"/>
</dbReference>
<reference key="1">
    <citation type="journal article" date="2008" name="DNA Res.">
        <title>Comparative genome analysis of Lactobacillus reuteri and Lactobacillus fermentum reveal a genomic island for reuterin and cobalamin production.</title>
        <authorList>
            <person name="Morita H."/>
            <person name="Toh H."/>
            <person name="Fukuda S."/>
            <person name="Horikawa H."/>
            <person name="Oshima K."/>
            <person name="Suzuki T."/>
            <person name="Murakami M."/>
            <person name="Hisamatsu S."/>
            <person name="Kato Y."/>
            <person name="Takizawa T."/>
            <person name="Fukuoka H."/>
            <person name="Yoshimura T."/>
            <person name="Itoh K."/>
            <person name="O'Sullivan D.J."/>
            <person name="McKay L.L."/>
            <person name="Ohno H."/>
            <person name="Kikuchi J."/>
            <person name="Masaoka T."/>
            <person name="Hattori M."/>
        </authorList>
    </citation>
    <scope>NUCLEOTIDE SEQUENCE [LARGE SCALE GENOMIC DNA]</scope>
    <source>
        <strain>JCM 1112</strain>
    </source>
</reference>
<evidence type="ECO:0000250" key="1"/>
<evidence type="ECO:0000255" key="2">
    <source>
        <dbReference type="HAMAP-Rule" id="MF_01109"/>
    </source>
</evidence>
<accession>B2G653</accession>
<comment type="function">
    <text evidence="1">Reversibly catalyzes the transfer of the carbamoyl group from carbamoyl phosphate (CP) to the N(epsilon) atom of ornithine (ORN) to produce L-citrulline.</text>
</comment>
<comment type="catalytic activity">
    <reaction evidence="2">
        <text>carbamoyl phosphate + L-ornithine = L-citrulline + phosphate + H(+)</text>
        <dbReference type="Rhea" id="RHEA:19513"/>
        <dbReference type="ChEBI" id="CHEBI:15378"/>
        <dbReference type="ChEBI" id="CHEBI:43474"/>
        <dbReference type="ChEBI" id="CHEBI:46911"/>
        <dbReference type="ChEBI" id="CHEBI:57743"/>
        <dbReference type="ChEBI" id="CHEBI:58228"/>
        <dbReference type="EC" id="2.1.3.3"/>
    </reaction>
</comment>
<comment type="pathway">
    <text evidence="2">Amino-acid degradation; L-arginine degradation via ADI pathway; carbamoyl phosphate from L-arginine: step 2/2.</text>
</comment>
<comment type="subcellular location">
    <subcellularLocation>
        <location evidence="2">Cytoplasm</location>
    </subcellularLocation>
</comment>
<comment type="similarity">
    <text evidence="2">Belongs to the aspartate/ornithine carbamoyltransferase superfamily. OTCase family.</text>
</comment>
<gene>
    <name evidence="2" type="primary">arcB</name>
    <name type="ordered locus">LAR_0419</name>
</gene>
<keyword id="KW-0056">Arginine metabolism</keyword>
<keyword id="KW-0963">Cytoplasm</keyword>
<keyword id="KW-0808">Transferase</keyword>